<proteinExistence type="inferred from homology"/>
<name>HLDD_ACTSZ</name>
<organism>
    <name type="scientific">Actinobacillus succinogenes (strain ATCC 55618 / DSM 22257 / CCUG 43843 / 130Z)</name>
    <dbReference type="NCBI Taxonomy" id="339671"/>
    <lineage>
        <taxon>Bacteria</taxon>
        <taxon>Pseudomonadati</taxon>
        <taxon>Pseudomonadota</taxon>
        <taxon>Gammaproteobacteria</taxon>
        <taxon>Pasteurellales</taxon>
        <taxon>Pasteurellaceae</taxon>
        <taxon>Actinobacillus</taxon>
    </lineage>
</organism>
<dbReference type="EC" id="5.1.3.20" evidence="1"/>
<dbReference type="EMBL" id="CP000746">
    <property type="protein sequence ID" value="ABR73779.1"/>
    <property type="molecule type" value="Genomic_DNA"/>
</dbReference>
<dbReference type="RefSeq" id="WP_012072164.1">
    <property type="nucleotide sequence ID" value="NC_009655.1"/>
</dbReference>
<dbReference type="SMR" id="A6VLD2"/>
<dbReference type="STRING" id="339671.Asuc_0401"/>
<dbReference type="KEGG" id="asu:Asuc_0401"/>
<dbReference type="eggNOG" id="COG0451">
    <property type="taxonomic scope" value="Bacteria"/>
</dbReference>
<dbReference type="HOGENOM" id="CLU_007383_1_3_6"/>
<dbReference type="OrthoDB" id="9803010at2"/>
<dbReference type="UniPathway" id="UPA00356">
    <property type="reaction ID" value="UER00440"/>
</dbReference>
<dbReference type="Proteomes" id="UP000001114">
    <property type="component" value="Chromosome"/>
</dbReference>
<dbReference type="GO" id="GO:0008712">
    <property type="term" value="F:ADP-glyceromanno-heptose 6-epimerase activity"/>
    <property type="evidence" value="ECO:0007669"/>
    <property type="project" value="UniProtKB-UniRule"/>
</dbReference>
<dbReference type="GO" id="GO:0050661">
    <property type="term" value="F:NADP binding"/>
    <property type="evidence" value="ECO:0007669"/>
    <property type="project" value="InterPro"/>
</dbReference>
<dbReference type="GO" id="GO:0097171">
    <property type="term" value="P:ADP-L-glycero-beta-D-manno-heptose biosynthetic process"/>
    <property type="evidence" value="ECO:0007669"/>
    <property type="project" value="UniProtKB-UniPathway"/>
</dbReference>
<dbReference type="GO" id="GO:0005975">
    <property type="term" value="P:carbohydrate metabolic process"/>
    <property type="evidence" value="ECO:0007669"/>
    <property type="project" value="UniProtKB-UniRule"/>
</dbReference>
<dbReference type="CDD" id="cd05248">
    <property type="entry name" value="ADP_GME_SDR_e"/>
    <property type="match status" value="1"/>
</dbReference>
<dbReference type="Gene3D" id="3.40.50.720">
    <property type="entry name" value="NAD(P)-binding Rossmann-like Domain"/>
    <property type="match status" value="1"/>
</dbReference>
<dbReference type="Gene3D" id="3.90.25.10">
    <property type="entry name" value="UDP-galactose 4-epimerase, domain 1"/>
    <property type="match status" value="1"/>
</dbReference>
<dbReference type="HAMAP" id="MF_01601">
    <property type="entry name" value="Heptose_epimerase"/>
    <property type="match status" value="1"/>
</dbReference>
<dbReference type="InterPro" id="IPR001509">
    <property type="entry name" value="Epimerase_deHydtase"/>
</dbReference>
<dbReference type="InterPro" id="IPR011912">
    <property type="entry name" value="Heptose_epim"/>
</dbReference>
<dbReference type="InterPro" id="IPR036291">
    <property type="entry name" value="NAD(P)-bd_dom_sf"/>
</dbReference>
<dbReference type="NCBIfam" id="TIGR02197">
    <property type="entry name" value="heptose_epim"/>
    <property type="match status" value="1"/>
</dbReference>
<dbReference type="NCBIfam" id="NF008360">
    <property type="entry name" value="PRK11150.1"/>
    <property type="match status" value="1"/>
</dbReference>
<dbReference type="PANTHER" id="PTHR43103:SF3">
    <property type="entry name" value="ADP-L-GLYCERO-D-MANNO-HEPTOSE-6-EPIMERASE"/>
    <property type="match status" value="1"/>
</dbReference>
<dbReference type="PANTHER" id="PTHR43103">
    <property type="entry name" value="NUCLEOSIDE-DIPHOSPHATE-SUGAR EPIMERASE"/>
    <property type="match status" value="1"/>
</dbReference>
<dbReference type="Pfam" id="PF01370">
    <property type="entry name" value="Epimerase"/>
    <property type="match status" value="1"/>
</dbReference>
<dbReference type="SUPFAM" id="SSF51735">
    <property type="entry name" value="NAD(P)-binding Rossmann-fold domains"/>
    <property type="match status" value="1"/>
</dbReference>
<sequence>MIIVTGGAGFIGSNIVKSLNDLGRKDILVVDNLKDGTKFINLVDLDIADYCDKEDFIAQIIAGDDFGDIDAVFHEGACSATTEWDGKYIMHNNYEYSKELLHYCLDREIPFFYASSAATYGDKTEFVEERQFEGPLNVYGYSKFLFDQYVREILPNASSPVCGFKYFNVYGPREQHKGSMSSVAFHLNNQILKGENPKLFAGSEHFLRDFVYVGDVAAVNIWAWQNKISGIFNCGTGHAESFKAVAEAVIKHHGKGAIETIPFPDHLKSRYQEYTQADLTKLRAAGCNLKFKSVAEGVAEYMAWLNRK</sequence>
<keyword id="KW-0119">Carbohydrate metabolism</keyword>
<keyword id="KW-0413">Isomerase</keyword>
<keyword id="KW-0521">NADP</keyword>
<keyword id="KW-1185">Reference proteome</keyword>
<comment type="function">
    <text evidence="1">Catalyzes the interconversion between ADP-D-glycero-beta-D-manno-heptose and ADP-L-glycero-beta-D-manno-heptose via an epimerization at carbon 6 of the heptose.</text>
</comment>
<comment type="catalytic activity">
    <reaction evidence="1">
        <text>ADP-D-glycero-beta-D-manno-heptose = ADP-L-glycero-beta-D-manno-heptose</text>
        <dbReference type="Rhea" id="RHEA:17577"/>
        <dbReference type="ChEBI" id="CHEBI:59967"/>
        <dbReference type="ChEBI" id="CHEBI:61506"/>
        <dbReference type="EC" id="5.1.3.20"/>
    </reaction>
</comment>
<comment type="cofactor">
    <cofactor evidence="1">
        <name>NADP(+)</name>
        <dbReference type="ChEBI" id="CHEBI:58349"/>
    </cofactor>
    <text evidence="1">Binds 1 NADP(+) per subunit.</text>
</comment>
<comment type="pathway">
    <text evidence="1">Nucleotide-sugar biosynthesis; ADP-L-glycero-beta-D-manno-heptose biosynthesis; ADP-L-glycero-beta-D-manno-heptose from D-glycero-beta-D-manno-heptose 7-phosphate: step 4/4.</text>
</comment>
<comment type="subunit">
    <text evidence="1">Homopentamer.</text>
</comment>
<comment type="domain">
    <text evidence="1">Contains a large N-terminal NADP-binding domain, and a smaller C-terminal substrate-binding domain.</text>
</comment>
<comment type="similarity">
    <text evidence="1">Belongs to the NAD(P)-dependent epimerase/dehydratase family. HldD subfamily.</text>
</comment>
<feature type="chain" id="PRO_1000073621" description="ADP-L-glycero-D-manno-heptose-6-epimerase">
    <location>
        <begin position="1"/>
        <end position="308"/>
    </location>
</feature>
<feature type="active site" description="Proton acceptor" evidence="1">
    <location>
        <position position="139"/>
    </location>
</feature>
<feature type="active site" description="Proton acceptor" evidence="1">
    <location>
        <position position="177"/>
    </location>
</feature>
<feature type="binding site" evidence="1">
    <location>
        <begin position="10"/>
        <end position="11"/>
    </location>
    <ligand>
        <name>NADP(+)</name>
        <dbReference type="ChEBI" id="CHEBI:58349"/>
    </ligand>
</feature>
<feature type="binding site" evidence="1">
    <location>
        <begin position="31"/>
        <end position="32"/>
    </location>
    <ligand>
        <name>NADP(+)</name>
        <dbReference type="ChEBI" id="CHEBI:58349"/>
    </ligand>
</feature>
<feature type="binding site" evidence="1">
    <location>
        <position position="38"/>
    </location>
    <ligand>
        <name>NADP(+)</name>
        <dbReference type="ChEBI" id="CHEBI:58349"/>
    </ligand>
</feature>
<feature type="binding site" evidence="1">
    <location>
        <position position="53"/>
    </location>
    <ligand>
        <name>NADP(+)</name>
        <dbReference type="ChEBI" id="CHEBI:58349"/>
    </ligand>
</feature>
<feature type="binding site" evidence="1">
    <location>
        <begin position="75"/>
        <end position="79"/>
    </location>
    <ligand>
        <name>NADP(+)</name>
        <dbReference type="ChEBI" id="CHEBI:58349"/>
    </ligand>
</feature>
<feature type="binding site" evidence="1">
    <location>
        <position position="92"/>
    </location>
    <ligand>
        <name>NADP(+)</name>
        <dbReference type="ChEBI" id="CHEBI:58349"/>
    </ligand>
</feature>
<feature type="binding site" evidence="1">
    <location>
        <position position="143"/>
    </location>
    <ligand>
        <name>NADP(+)</name>
        <dbReference type="ChEBI" id="CHEBI:58349"/>
    </ligand>
</feature>
<feature type="binding site" evidence="1">
    <location>
        <position position="168"/>
    </location>
    <ligand>
        <name>substrate</name>
    </ligand>
</feature>
<feature type="binding site" evidence="1">
    <location>
        <position position="169"/>
    </location>
    <ligand>
        <name>NADP(+)</name>
        <dbReference type="ChEBI" id="CHEBI:58349"/>
    </ligand>
</feature>
<feature type="binding site" evidence="1">
    <location>
        <position position="177"/>
    </location>
    <ligand>
        <name>NADP(+)</name>
        <dbReference type="ChEBI" id="CHEBI:58349"/>
    </ligand>
</feature>
<feature type="binding site" evidence="1">
    <location>
        <position position="179"/>
    </location>
    <ligand>
        <name>substrate</name>
    </ligand>
</feature>
<feature type="binding site" evidence="1">
    <location>
        <position position="186"/>
    </location>
    <ligand>
        <name>substrate</name>
    </ligand>
</feature>
<feature type="binding site" evidence="1">
    <location>
        <begin position="200"/>
        <end position="203"/>
    </location>
    <ligand>
        <name>substrate</name>
    </ligand>
</feature>
<feature type="binding site" evidence="1">
    <location>
        <position position="208"/>
    </location>
    <ligand>
        <name>substrate</name>
    </ligand>
</feature>
<feature type="binding site" evidence="1">
    <location>
        <position position="271"/>
    </location>
    <ligand>
        <name>substrate</name>
    </ligand>
</feature>
<evidence type="ECO:0000255" key="1">
    <source>
        <dbReference type="HAMAP-Rule" id="MF_01601"/>
    </source>
</evidence>
<accession>A6VLD2</accession>
<gene>
    <name evidence="1" type="primary">hldD</name>
    <name type="ordered locus">Asuc_0401</name>
</gene>
<protein>
    <recommendedName>
        <fullName evidence="1">ADP-L-glycero-D-manno-heptose-6-epimerase</fullName>
        <ecNumber evidence="1">5.1.3.20</ecNumber>
    </recommendedName>
    <alternativeName>
        <fullName evidence="1">ADP-L-glycero-beta-D-manno-heptose-6-epimerase</fullName>
        <shortName evidence="1">ADP-glyceromanno-heptose 6-epimerase</shortName>
        <shortName evidence="1">ADP-hep 6-epimerase</shortName>
        <shortName evidence="1">AGME</shortName>
    </alternativeName>
</protein>
<reference key="1">
    <citation type="journal article" date="2010" name="BMC Genomics">
        <title>A genomic perspective on the potential of Actinobacillus succinogenes for industrial succinate production.</title>
        <authorList>
            <person name="McKinlay J.B."/>
            <person name="Laivenieks M."/>
            <person name="Schindler B.D."/>
            <person name="McKinlay A.A."/>
            <person name="Siddaramappa S."/>
            <person name="Challacombe J.F."/>
            <person name="Lowry S.R."/>
            <person name="Clum A."/>
            <person name="Lapidus A.L."/>
            <person name="Burkhart K.B."/>
            <person name="Harkins V."/>
            <person name="Vieille C."/>
        </authorList>
    </citation>
    <scope>NUCLEOTIDE SEQUENCE [LARGE SCALE GENOMIC DNA]</scope>
    <source>
        <strain>ATCC 55618 / DSM 22257 / CCUG 43843 / 130Z</strain>
    </source>
</reference>